<gene>
    <name evidence="6" type="primary">ADE8</name>
    <name type="ordered locus">YDR408C</name>
    <name type="ORF">D9509.26</name>
</gene>
<feature type="chain" id="PRO_0000074954" description="Phosphoribosylglycinamide formyltransferase">
    <location>
        <begin position="1"/>
        <end position="214"/>
    </location>
</feature>
<feature type="active site" description="Proton donor" evidence="2">
    <location>
        <position position="125"/>
    </location>
</feature>
<feature type="binding site" evidence="2">
    <location>
        <begin position="12"/>
        <end position="14"/>
    </location>
    <ligand>
        <name>N(1)-(5-phospho-beta-D-ribosyl)glycinamide</name>
        <dbReference type="ChEBI" id="CHEBI:143788"/>
    </ligand>
</feature>
<feature type="binding site" evidence="2">
    <location>
        <begin position="105"/>
        <end position="108"/>
    </location>
    <ligand>
        <name>(6R)-10-formyltetrahydrofolate</name>
        <dbReference type="ChEBI" id="CHEBI:195366"/>
    </ligand>
</feature>
<feature type="binding site" evidence="2">
    <location>
        <position position="123"/>
    </location>
    <ligand>
        <name>(6R)-10-formyltetrahydrofolate</name>
        <dbReference type="ChEBI" id="CHEBI:195366"/>
    </ligand>
</feature>
<feature type="binding site" evidence="1">
    <location>
        <position position="167"/>
    </location>
    <ligand>
        <name>(6R)-10-formyltetrahydrofolate</name>
        <dbReference type="ChEBI" id="CHEBI:195366"/>
    </ligand>
</feature>
<feature type="binding site" evidence="1">
    <location>
        <position position="197"/>
    </location>
    <ligand>
        <name>N(1)-(5-phospho-beta-D-ribosyl)glycinamide</name>
        <dbReference type="ChEBI" id="CHEBI:143788"/>
    </ligand>
</feature>
<feature type="site" description="Raises pKa of active site His" evidence="1">
    <location>
        <position position="167"/>
    </location>
</feature>
<sequence>MARIVVLISGSGSNLQALIDAQKQGQLGEDAHIVSVISSSKKAYGLTRAADNNIPTKVCSLYPYTKGIAKEDKAARAKARSQFENDLAKLVLEEKPDVIICAGWLLILGSTFLSQLQSVPILNLHPALPGCFDGTTHAIEMAWRKCQDENKPLTAGCMVHYVIEEVDKGEPLVVKKLEIIPGEETLEQYEQRVHDAEHIAIVEATYKVLQQLHK</sequence>
<proteinExistence type="evidence at protein level"/>
<comment type="catalytic activity">
    <reaction>
        <text>N(1)-(5-phospho-beta-D-ribosyl)glycinamide + (6R)-10-formyltetrahydrofolate = N(2)-formyl-N(1)-(5-phospho-beta-D-ribosyl)glycinamide + (6S)-5,6,7,8-tetrahydrofolate + H(+)</text>
        <dbReference type="Rhea" id="RHEA:15053"/>
        <dbReference type="ChEBI" id="CHEBI:15378"/>
        <dbReference type="ChEBI" id="CHEBI:57453"/>
        <dbReference type="ChEBI" id="CHEBI:143788"/>
        <dbReference type="ChEBI" id="CHEBI:147286"/>
        <dbReference type="ChEBI" id="CHEBI:195366"/>
        <dbReference type="EC" id="2.1.2.2"/>
    </reaction>
</comment>
<comment type="pathway">
    <text>Purine metabolism; IMP biosynthesis via de novo pathway; N(2)-formyl-N(1)-(5-phospho-D-ribosyl)glycinamide from N(1)-(5-phospho-D-ribosyl)glycinamide (10-formyl THF route): step 1/1.</text>
</comment>
<comment type="induction">
    <text evidence="4">Induced by amino acid and purine starvation in a GCN4 dependent manner.</text>
</comment>
<comment type="miscellaneous">
    <text evidence="3">Present with 3910 molecules/cell in log phase SD medium.</text>
</comment>
<comment type="similarity">
    <text evidence="5">Belongs to the GART family.</text>
</comment>
<protein>
    <recommendedName>
        <fullName>Phosphoribosylglycinamide formyltransferase</fullName>
        <ecNumber>2.1.2.2</ecNumber>
    </recommendedName>
    <alternativeName>
        <fullName>5'-phosphoribosylglycinamide transformylase</fullName>
    </alternativeName>
    <alternativeName>
        <fullName>GAR transformylase</fullName>
        <shortName>GART</shortName>
    </alternativeName>
</protein>
<name>PUR3_YEAST</name>
<dbReference type="EC" id="2.1.2.2"/>
<dbReference type="EMBL" id="M36585">
    <property type="protein sequence ID" value="AAA34406.1"/>
    <property type="molecule type" value="Genomic_DNA"/>
</dbReference>
<dbReference type="EMBL" id="U32274">
    <property type="protein sequence ID" value="AAB64848.1"/>
    <property type="molecule type" value="Genomic_DNA"/>
</dbReference>
<dbReference type="EMBL" id="BK006938">
    <property type="protein sequence ID" value="DAA12250.1"/>
    <property type="molecule type" value="Genomic_DNA"/>
</dbReference>
<dbReference type="PIR" id="A22316">
    <property type="entry name" value="A8BYD"/>
</dbReference>
<dbReference type="RefSeq" id="NP_010696.3">
    <property type="nucleotide sequence ID" value="NM_001180716.3"/>
</dbReference>
<dbReference type="SMR" id="P04161"/>
<dbReference type="BioGRID" id="32468">
    <property type="interactions" value="64"/>
</dbReference>
<dbReference type="DIP" id="DIP-1177N"/>
<dbReference type="FunCoup" id="P04161">
    <property type="interactions" value="251"/>
</dbReference>
<dbReference type="IntAct" id="P04161">
    <property type="interactions" value="8"/>
</dbReference>
<dbReference type="MINT" id="P04161"/>
<dbReference type="STRING" id="4932.YDR408C"/>
<dbReference type="PaxDb" id="4932-YDR408C"/>
<dbReference type="PeptideAtlas" id="P04161"/>
<dbReference type="EnsemblFungi" id="YDR408C_mRNA">
    <property type="protein sequence ID" value="YDR408C"/>
    <property type="gene ID" value="YDR408C"/>
</dbReference>
<dbReference type="GeneID" id="852017"/>
<dbReference type="KEGG" id="sce:YDR408C"/>
<dbReference type="AGR" id="SGD:S000002816"/>
<dbReference type="SGD" id="S000002816">
    <property type="gene designation" value="ADE8"/>
</dbReference>
<dbReference type="VEuPathDB" id="FungiDB:YDR408C"/>
<dbReference type="eggNOG" id="KOG3076">
    <property type="taxonomic scope" value="Eukaryota"/>
</dbReference>
<dbReference type="GeneTree" id="ENSGT00390000000292"/>
<dbReference type="HOGENOM" id="CLU_038395_0_1_1"/>
<dbReference type="InParanoid" id="P04161"/>
<dbReference type="OMA" id="HYVDEGM"/>
<dbReference type="OrthoDB" id="5575075at2759"/>
<dbReference type="BioCyc" id="MetaCyc:YDR408C-MONOMER"/>
<dbReference type="BioCyc" id="YEAST:YDR408C-MONOMER"/>
<dbReference type="UniPathway" id="UPA00074">
    <property type="reaction ID" value="UER00126"/>
</dbReference>
<dbReference type="BioGRID-ORCS" id="852017">
    <property type="hits" value="0 hits in 10 CRISPR screens"/>
</dbReference>
<dbReference type="PRO" id="PR:P04161"/>
<dbReference type="Proteomes" id="UP000002311">
    <property type="component" value="Chromosome IV"/>
</dbReference>
<dbReference type="RNAct" id="P04161">
    <property type="molecule type" value="protein"/>
</dbReference>
<dbReference type="GO" id="GO:0005737">
    <property type="term" value="C:cytoplasm"/>
    <property type="evidence" value="ECO:0007005"/>
    <property type="project" value="SGD"/>
</dbReference>
<dbReference type="GO" id="GO:0005634">
    <property type="term" value="C:nucleus"/>
    <property type="evidence" value="ECO:0007005"/>
    <property type="project" value="SGD"/>
</dbReference>
<dbReference type="GO" id="GO:0004644">
    <property type="term" value="F:phosphoribosylglycinamide formyltransferase activity"/>
    <property type="evidence" value="ECO:0000315"/>
    <property type="project" value="SGD"/>
</dbReference>
<dbReference type="GO" id="GO:0006189">
    <property type="term" value="P:'de novo' IMP biosynthetic process"/>
    <property type="evidence" value="ECO:0000315"/>
    <property type="project" value="SGD"/>
</dbReference>
<dbReference type="GO" id="GO:0046084">
    <property type="term" value="P:adenine biosynthetic process"/>
    <property type="evidence" value="ECO:0000315"/>
    <property type="project" value="SGD"/>
</dbReference>
<dbReference type="GO" id="GO:0006164">
    <property type="term" value="P:purine nucleotide biosynthetic process"/>
    <property type="evidence" value="ECO:0000315"/>
    <property type="project" value="SGD"/>
</dbReference>
<dbReference type="CDD" id="cd08645">
    <property type="entry name" value="FMT_core_GART"/>
    <property type="match status" value="1"/>
</dbReference>
<dbReference type="FunFam" id="3.40.50.170:FF:000009">
    <property type="entry name" value="Phosphoribosylglycinamide formyltransferase (Eurofung)"/>
    <property type="match status" value="1"/>
</dbReference>
<dbReference type="Gene3D" id="3.40.50.170">
    <property type="entry name" value="Formyl transferase, N-terminal domain"/>
    <property type="match status" value="1"/>
</dbReference>
<dbReference type="HAMAP" id="MF_01930">
    <property type="entry name" value="PurN"/>
    <property type="match status" value="1"/>
</dbReference>
<dbReference type="InterPro" id="IPR002376">
    <property type="entry name" value="Formyl_transf_N"/>
</dbReference>
<dbReference type="InterPro" id="IPR036477">
    <property type="entry name" value="Formyl_transf_N_sf"/>
</dbReference>
<dbReference type="InterPro" id="IPR004607">
    <property type="entry name" value="GART"/>
</dbReference>
<dbReference type="InterPro" id="IPR001555">
    <property type="entry name" value="GART_AS"/>
</dbReference>
<dbReference type="NCBIfam" id="TIGR00639">
    <property type="entry name" value="PurN"/>
    <property type="match status" value="1"/>
</dbReference>
<dbReference type="PANTHER" id="PTHR43369">
    <property type="entry name" value="PHOSPHORIBOSYLGLYCINAMIDE FORMYLTRANSFERASE"/>
    <property type="match status" value="1"/>
</dbReference>
<dbReference type="PANTHER" id="PTHR43369:SF2">
    <property type="entry name" value="PHOSPHORIBOSYLGLYCINAMIDE FORMYLTRANSFERASE"/>
    <property type="match status" value="1"/>
</dbReference>
<dbReference type="Pfam" id="PF00551">
    <property type="entry name" value="Formyl_trans_N"/>
    <property type="match status" value="1"/>
</dbReference>
<dbReference type="SUPFAM" id="SSF53328">
    <property type="entry name" value="Formyltransferase"/>
    <property type="match status" value="1"/>
</dbReference>
<dbReference type="PROSITE" id="PS00373">
    <property type="entry name" value="GART"/>
    <property type="match status" value="1"/>
</dbReference>
<reference key="1">
    <citation type="journal article" date="1985" name="Nature">
        <title>Mismatch-specific post-meiotic segregation frequency in yeast suggests a heteroduplex recombination intermediate.</title>
        <authorList>
            <person name="White J.H."/>
            <person name="Lusnak K."/>
            <person name="Fogel S."/>
        </authorList>
    </citation>
    <scope>NUCLEOTIDE SEQUENCE [GENOMIC DNA]</scope>
</reference>
<reference key="2">
    <citation type="journal article" date="1997" name="Nature">
        <title>The nucleotide sequence of Saccharomyces cerevisiae chromosome IV.</title>
        <authorList>
            <person name="Jacq C."/>
            <person name="Alt-Moerbe J."/>
            <person name="Andre B."/>
            <person name="Arnold W."/>
            <person name="Bahr A."/>
            <person name="Ballesta J.P.G."/>
            <person name="Bargues M."/>
            <person name="Baron L."/>
            <person name="Becker A."/>
            <person name="Biteau N."/>
            <person name="Bloecker H."/>
            <person name="Blugeon C."/>
            <person name="Boskovic J."/>
            <person name="Brandt P."/>
            <person name="Brueckner M."/>
            <person name="Buitrago M.J."/>
            <person name="Coster F."/>
            <person name="Delaveau T."/>
            <person name="del Rey F."/>
            <person name="Dujon B."/>
            <person name="Eide L.G."/>
            <person name="Garcia-Cantalejo J.M."/>
            <person name="Goffeau A."/>
            <person name="Gomez-Peris A."/>
            <person name="Granotier C."/>
            <person name="Hanemann V."/>
            <person name="Hankeln T."/>
            <person name="Hoheisel J.D."/>
            <person name="Jaeger W."/>
            <person name="Jimenez A."/>
            <person name="Jonniaux J.-L."/>
            <person name="Kraemer C."/>
            <person name="Kuester H."/>
            <person name="Laamanen P."/>
            <person name="Legros Y."/>
            <person name="Louis E.J."/>
            <person name="Moeller-Rieker S."/>
            <person name="Monnet A."/>
            <person name="Moro M."/>
            <person name="Mueller-Auer S."/>
            <person name="Nussbaumer B."/>
            <person name="Paricio N."/>
            <person name="Paulin L."/>
            <person name="Perea J."/>
            <person name="Perez-Alonso M."/>
            <person name="Perez-Ortin J.E."/>
            <person name="Pohl T.M."/>
            <person name="Prydz H."/>
            <person name="Purnelle B."/>
            <person name="Rasmussen S.W."/>
            <person name="Remacha M.A."/>
            <person name="Revuelta J.L."/>
            <person name="Rieger M."/>
            <person name="Salom D."/>
            <person name="Saluz H.P."/>
            <person name="Saiz J.E."/>
            <person name="Saren A.-M."/>
            <person name="Schaefer M."/>
            <person name="Scharfe M."/>
            <person name="Schmidt E.R."/>
            <person name="Schneider C."/>
            <person name="Scholler P."/>
            <person name="Schwarz S."/>
            <person name="Soler-Mira A."/>
            <person name="Urrestarazu L.A."/>
            <person name="Verhasselt P."/>
            <person name="Vissers S."/>
            <person name="Voet M."/>
            <person name="Volckaert G."/>
            <person name="Wagner G."/>
            <person name="Wambutt R."/>
            <person name="Wedler E."/>
            <person name="Wedler H."/>
            <person name="Woelfl S."/>
            <person name="Harris D.E."/>
            <person name="Bowman S."/>
            <person name="Brown D."/>
            <person name="Churcher C.M."/>
            <person name="Connor R."/>
            <person name="Dedman K."/>
            <person name="Gentles S."/>
            <person name="Hamlin N."/>
            <person name="Hunt S."/>
            <person name="Jones L."/>
            <person name="McDonald S."/>
            <person name="Murphy L.D."/>
            <person name="Niblett D."/>
            <person name="Odell C."/>
            <person name="Oliver K."/>
            <person name="Rajandream M.A."/>
            <person name="Richards C."/>
            <person name="Shore L."/>
            <person name="Walsh S.V."/>
            <person name="Barrell B.G."/>
            <person name="Dietrich F.S."/>
            <person name="Mulligan J.T."/>
            <person name="Allen E."/>
            <person name="Araujo R."/>
            <person name="Aviles E."/>
            <person name="Berno A."/>
            <person name="Carpenter J."/>
            <person name="Chen E."/>
            <person name="Cherry J.M."/>
            <person name="Chung E."/>
            <person name="Duncan M."/>
            <person name="Hunicke-Smith S."/>
            <person name="Hyman R.W."/>
            <person name="Komp C."/>
            <person name="Lashkari D."/>
            <person name="Lew H."/>
            <person name="Lin D."/>
            <person name="Mosedale D."/>
            <person name="Nakahara K."/>
            <person name="Namath A."/>
            <person name="Oefner P."/>
            <person name="Oh C."/>
            <person name="Petel F.X."/>
            <person name="Roberts D."/>
            <person name="Schramm S."/>
            <person name="Schroeder M."/>
            <person name="Shogren T."/>
            <person name="Shroff N."/>
            <person name="Winant A."/>
            <person name="Yelton M.A."/>
            <person name="Botstein D."/>
            <person name="Davis R.W."/>
            <person name="Johnston M."/>
            <person name="Andrews S."/>
            <person name="Brinkman R."/>
            <person name="Cooper J."/>
            <person name="Ding H."/>
            <person name="Du Z."/>
            <person name="Favello A."/>
            <person name="Fulton L."/>
            <person name="Gattung S."/>
            <person name="Greco T."/>
            <person name="Hallsworth K."/>
            <person name="Hawkins J."/>
            <person name="Hillier L.W."/>
            <person name="Jier M."/>
            <person name="Johnson D."/>
            <person name="Johnston L."/>
            <person name="Kirsten J."/>
            <person name="Kucaba T."/>
            <person name="Langston Y."/>
            <person name="Latreille P."/>
            <person name="Le T."/>
            <person name="Mardis E."/>
            <person name="Menezes S."/>
            <person name="Miller N."/>
            <person name="Nhan M."/>
            <person name="Pauley A."/>
            <person name="Peluso D."/>
            <person name="Rifkin L."/>
            <person name="Riles L."/>
            <person name="Taich A."/>
            <person name="Trevaskis E."/>
            <person name="Vignati D."/>
            <person name="Wilcox L."/>
            <person name="Wohldman P."/>
            <person name="Vaudin M."/>
            <person name="Wilson R."/>
            <person name="Waterston R."/>
            <person name="Albermann K."/>
            <person name="Hani J."/>
            <person name="Heumann K."/>
            <person name="Kleine K."/>
            <person name="Mewes H.-W."/>
            <person name="Zollner A."/>
            <person name="Zaccaria P."/>
        </authorList>
    </citation>
    <scope>NUCLEOTIDE SEQUENCE [LARGE SCALE GENOMIC DNA]</scope>
    <source>
        <strain>ATCC 204508 / S288c</strain>
    </source>
</reference>
<reference key="3">
    <citation type="journal article" date="2014" name="G3 (Bethesda)">
        <title>The reference genome sequence of Saccharomyces cerevisiae: Then and now.</title>
        <authorList>
            <person name="Engel S.R."/>
            <person name="Dietrich F.S."/>
            <person name="Fisk D.G."/>
            <person name="Binkley G."/>
            <person name="Balakrishnan R."/>
            <person name="Costanzo M.C."/>
            <person name="Dwight S.S."/>
            <person name="Hitz B.C."/>
            <person name="Karra K."/>
            <person name="Nash R.S."/>
            <person name="Weng S."/>
            <person name="Wong E.D."/>
            <person name="Lloyd P."/>
            <person name="Skrzypek M.S."/>
            <person name="Miyasato S.R."/>
            <person name="Simison M."/>
            <person name="Cherry J.M."/>
        </authorList>
    </citation>
    <scope>GENOME REANNOTATION</scope>
    <source>
        <strain>ATCC 204508 / S288c</strain>
    </source>
</reference>
<reference key="4">
    <citation type="journal article" date="1993" name="Mol. Cell. Biol.">
        <title>Translation of the yeast transcriptional activator GCN4 is stimulated by purine limitation: implications for activation of the protein kinase GCN2.</title>
        <authorList>
            <person name="Rolfes R.J."/>
            <person name="Hinnebusch A.G."/>
        </authorList>
    </citation>
    <scope>INDUCTION</scope>
</reference>
<reference key="5">
    <citation type="journal article" date="2003" name="Nature">
        <title>Global analysis of protein expression in yeast.</title>
        <authorList>
            <person name="Ghaemmaghami S."/>
            <person name="Huh W.-K."/>
            <person name="Bower K."/>
            <person name="Howson R.W."/>
            <person name="Belle A."/>
            <person name="Dephoure N."/>
            <person name="O'Shea E.K."/>
            <person name="Weissman J.S."/>
        </authorList>
    </citation>
    <scope>LEVEL OF PROTEIN EXPRESSION [LARGE SCALE ANALYSIS]</scope>
</reference>
<keyword id="KW-0658">Purine biosynthesis</keyword>
<keyword id="KW-1185">Reference proteome</keyword>
<keyword id="KW-0808">Transferase</keyword>
<evidence type="ECO:0000250" key="1"/>
<evidence type="ECO:0000250" key="2">
    <source>
        <dbReference type="UniProtKB" id="P08179"/>
    </source>
</evidence>
<evidence type="ECO:0000269" key="3">
    <source>
    </source>
</evidence>
<evidence type="ECO:0000269" key="4">
    <source>
    </source>
</evidence>
<evidence type="ECO:0000305" key="5"/>
<evidence type="ECO:0000312" key="6">
    <source>
        <dbReference type="SGD" id="S000002816"/>
    </source>
</evidence>
<organism>
    <name type="scientific">Saccharomyces cerevisiae (strain ATCC 204508 / S288c)</name>
    <name type="common">Baker's yeast</name>
    <dbReference type="NCBI Taxonomy" id="559292"/>
    <lineage>
        <taxon>Eukaryota</taxon>
        <taxon>Fungi</taxon>
        <taxon>Dikarya</taxon>
        <taxon>Ascomycota</taxon>
        <taxon>Saccharomycotina</taxon>
        <taxon>Saccharomycetes</taxon>
        <taxon>Saccharomycetales</taxon>
        <taxon>Saccharomycetaceae</taxon>
        <taxon>Saccharomyces</taxon>
    </lineage>
</organism>
<accession>P04161</accession>
<accession>D6VT40</accession>